<name>INCE_HUMAN</name>
<accession>Q9NQS7</accession>
<accession>A8MQD2</accession>
<accession>Q5Y192</accession>
<keyword id="KW-0002">3D-structure</keyword>
<keyword id="KW-0025">Alternative splicing</keyword>
<keyword id="KW-0131">Cell cycle</keyword>
<keyword id="KW-0132">Cell division</keyword>
<keyword id="KW-0137">Centromere</keyword>
<keyword id="KW-0158">Chromosome</keyword>
<keyword id="KW-0159">Chromosome partition</keyword>
<keyword id="KW-0963">Cytoplasm</keyword>
<keyword id="KW-0206">Cytoskeleton</keyword>
<keyword id="KW-0995">Kinetochore</keyword>
<keyword id="KW-0493">Microtubule</keyword>
<keyword id="KW-0498">Mitosis</keyword>
<keyword id="KW-0539">Nucleus</keyword>
<keyword id="KW-0597">Phosphoprotein</keyword>
<keyword id="KW-1267">Proteomics identification</keyword>
<keyword id="KW-1185">Reference proteome</keyword>
<evidence type="ECO:0000250" key="1">
    <source>
        <dbReference type="UniProtKB" id="O13024"/>
    </source>
</evidence>
<evidence type="ECO:0000250" key="2">
    <source>
        <dbReference type="UniProtKB" id="P53352"/>
    </source>
</evidence>
<evidence type="ECO:0000250" key="3">
    <source>
        <dbReference type="UniProtKB" id="Q9WU62"/>
    </source>
</evidence>
<evidence type="ECO:0000256" key="4">
    <source>
        <dbReference type="SAM" id="MobiDB-lite"/>
    </source>
</evidence>
<evidence type="ECO:0000269" key="5">
    <source>
    </source>
</evidence>
<evidence type="ECO:0000269" key="6">
    <source>
    </source>
</evidence>
<evidence type="ECO:0000269" key="7">
    <source>
    </source>
</evidence>
<evidence type="ECO:0000269" key="8">
    <source>
    </source>
</evidence>
<evidence type="ECO:0000269" key="9">
    <source>
    </source>
</evidence>
<evidence type="ECO:0000269" key="10">
    <source>
    </source>
</evidence>
<evidence type="ECO:0000269" key="11">
    <source>
    </source>
</evidence>
<evidence type="ECO:0000269" key="12">
    <source>
    </source>
</evidence>
<evidence type="ECO:0000269" key="13">
    <source>
    </source>
</evidence>
<evidence type="ECO:0000269" key="14">
    <source>
    </source>
</evidence>
<evidence type="ECO:0000269" key="15">
    <source>
    </source>
</evidence>
<evidence type="ECO:0000269" key="16">
    <source>
    </source>
</evidence>
<evidence type="ECO:0000269" key="17">
    <source>
    </source>
</evidence>
<evidence type="ECO:0000269" key="18">
    <source>
    </source>
</evidence>
<evidence type="ECO:0000269" key="19">
    <source>
    </source>
</evidence>
<evidence type="ECO:0000269" key="20">
    <source>
    </source>
</evidence>
<evidence type="ECO:0000303" key="21">
    <source>
    </source>
</evidence>
<evidence type="ECO:0000305" key="22"/>
<evidence type="ECO:0000305" key="23">
    <source>
    </source>
</evidence>
<evidence type="ECO:0007744" key="24">
    <source>
    </source>
</evidence>
<evidence type="ECO:0007744" key="25">
    <source>
    </source>
</evidence>
<evidence type="ECO:0007744" key="26">
    <source>
    </source>
</evidence>
<evidence type="ECO:0007744" key="27">
    <source>
    </source>
</evidence>
<evidence type="ECO:0007744" key="28">
    <source>
    </source>
</evidence>
<evidence type="ECO:0007744" key="29">
    <source>
    </source>
</evidence>
<evidence type="ECO:0007744" key="30">
    <source>
    </source>
</evidence>
<evidence type="ECO:0007744" key="31">
    <source>
    </source>
</evidence>
<evidence type="ECO:0007829" key="32">
    <source>
        <dbReference type="PDB" id="2QFA"/>
    </source>
</evidence>
<evidence type="ECO:0007829" key="33">
    <source>
        <dbReference type="PDB" id="6GR8"/>
    </source>
</evidence>
<proteinExistence type="evidence at protein level"/>
<comment type="function">
    <text evidence="2 7 10 12 17 19">Component of the chromosomal passenger complex (CPC), a complex that acts as a key regulator of mitosis. The CPC complex has essential functions at the centromere in ensuring correct chromosome alignment and segregation and is required for chromatin-induced microtubule stabilization and spindle assembly. Acts as a scaffold regulating CPC localization and activity. The C-terminus associates with AURKB or AURKC, the N-terminus associated with BIRC5/survivin and CDCA8/borealin tethers the CPC to the inner centromere, and the microtubule binding activity within the central SAH domain directs AURKB/C toward substrates near microtubules (PubMed:12925766, PubMed:15316025, PubMed:27332895). The flexibility of the SAH domain is proposed to allow AURKB/C to follow substrates on dynamic microtubules while ensuring CPC docking to static chromatin (By similarity). Activates AURKB and AURKC (PubMed:27332895). Required for localization of CBX5 to mitotic centromeres (PubMed:21346195). Controls the kinetochore localization of BUB1 (PubMed:16760428).</text>
</comment>
<comment type="subunit">
    <text evidence="2 3 5 7 8 9 10 13 14 15 16 17 18 19 20">Component of the chromosomal passenger complex (CPC) composed of at least BIRC5/survivin, CDCA8/borealin, INCENP, AURKB or AURKC; in the complex binds directly to AURKB or AURKC via the IN box, and forms a triple-helix bundle-based subcomplex with BIRC5 and CDCA8 via its N-terminus (PubMed:17956729, PubMed:27332895). The reported homodimerization is questioned as the SAH domain is shown to be monomeric (By similarity). Interacts with H2AZ1 (By similarity). Interacts with CBX1 and CBX3. Interacts with tubulin beta chain. Interacts with EVI5. Interacts with CBX5; POGZ and INCENP compete for interaction with CBX5; regulates INCENP (and probably CPC) localization to centromeres in interphase and not required for proper mitotic progression or sister chromatid cohesion. Interacts with POGZ. Interacts with JTB.</text>
</comment>
<comment type="interaction">
    <interactant intactId="EBI-307907">
        <id>Q9NQS7</id>
    </interactant>
    <interactant intactId="EBI-448680">
        <id>O14965</id>
        <label>AURKA</label>
    </interactant>
    <organismsDiffer>false</organismsDiffer>
    <experiments>2</experiments>
</comment>
<comment type="interaction">
    <interactant intactId="EBI-307907">
        <id>Q9NQS7</id>
    </interactant>
    <interactant intactId="EBI-624291">
        <id>Q96GD4</id>
        <label>AURKB</label>
    </interactant>
    <organismsDiffer>false</organismsDiffer>
    <experiments>22</experiments>
</comment>
<comment type="interaction">
    <interactant intactId="EBI-307907">
        <id>Q9NQS7</id>
    </interactant>
    <interactant intactId="EBI-3926851">
        <id>Q9UQB9</id>
        <label>AURKC</label>
    </interactant>
    <organismsDiffer>false</organismsDiffer>
    <experiments>20</experiments>
</comment>
<comment type="interaction">
    <interactant intactId="EBI-307907">
        <id>Q9NQS7</id>
    </interactant>
    <interactant intactId="EBI-518823">
        <id>O15392</id>
        <label>BIRC5</label>
    </interactant>
    <organismsDiffer>false</organismsDiffer>
    <experiments>11</experiments>
</comment>
<comment type="interaction">
    <interactant intactId="EBI-307907">
        <id>Q9NQS7</id>
    </interactant>
    <interactant intactId="EBI-78219">
        <id>P45973</id>
        <label>CBX5</label>
    </interactant>
    <organismsDiffer>false</organismsDiffer>
    <experiments>11</experiments>
</comment>
<comment type="interaction">
    <interactant intactId="EBI-307907">
        <id>Q9NQS7</id>
    </interactant>
    <interactant intactId="EBI-979174">
        <id>Q53HL2</id>
        <label>CDCA8</label>
    </interactant>
    <organismsDiffer>false</organismsDiffer>
    <experiments>5</experiments>
</comment>
<comment type="interaction">
    <interactant intactId="EBI-307907">
        <id>Q9NQS7</id>
    </interactant>
    <interactant intactId="EBI-1056125">
        <id>Q16778</id>
        <label>H2BC21</label>
    </interactant>
    <organismsDiffer>false</organismsDiffer>
    <experiments>2</experiments>
</comment>
<comment type="interaction">
    <interactant intactId="EBI-15767972">
        <id>Q9NQS7-1</id>
    </interactant>
    <interactant intactId="EBI-448680">
        <id>O14965</id>
        <label>AURKA</label>
    </interactant>
    <organismsDiffer>false</organismsDiffer>
    <experiments>2</experiments>
</comment>
<comment type="interaction">
    <interactant intactId="EBI-15767972">
        <id>Q9NQS7-1</id>
    </interactant>
    <interactant intactId="EBI-624291">
        <id>Q96GD4</id>
        <label>AURKB</label>
    </interactant>
    <organismsDiffer>false</organismsDiffer>
    <experiments>2</experiments>
</comment>
<comment type="subcellular location">
    <subcellularLocation>
        <location evidence="6">Nucleus</location>
    </subcellularLocation>
    <subcellularLocation>
        <location evidence="6 7 10 12">Chromosome</location>
        <location evidence="6 7 10 12">Centromere</location>
    </subcellularLocation>
    <subcellularLocation>
        <location evidence="6 10">Cytoplasm</location>
        <location evidence="6 10">Cytoskeleton</location>
        <location evidence="6 10">Spindle</location>
    </subcellularLocation>
    <subcellularLocation>
        <location evidence="10">Midbody</location>
    </subcellularLocation>
    <subcellularLocation>
        <location evidence="8">Chromosome</location>
        <location evidence="8">Centromere</location>
        <location evidence="8">Kinetochore</location>
    </subcellularLocation>
    <text evidence="3 6 10 12">Colocalized at synaptonemal complex central element from zygotene up to late pachytene when it begins to relocalize to heterochromatic chromocenters. Colocalizes with AURKB at a connecting strand traversing the centromere region and joining sister kinetochores, in metaphase II centromeres. This strand disappears at the metaphase II/anaphase II transition and relocalizes to the spindle midzone (By similarity). Colocalizes with AURKB at mitotic chromosomes (PubMed:11453556). Localizes to inner kinetochore (PubMed:16760428). Localizes on chromosome arms and inner centromeres from prophase through metaphase and then transferring to the spindle midzone and midbody from anaphase through cytokinesis (PubMed:15316025). Cocalizes to the equatorial cell cortex at anaphase (PubMed:11453556).</text>
</comment>
<comment type="alternative products">
    <event type="alternative splicing"/>
    <isoform>
        <id>Q9NQS7-1</id>
        <name>1</name>
        <sequence type="displayed"/>
    </isoform>
    <isoform>
        <id>Q9NQS7-2</id>
        <name>2</name>
        <sequence type="described" ref="VSP_035651"/>
    </isoform>
</comment>
<comment type="domain">
    <text evidence="1 19">The IN box mediates interaction with AURKB and AURKC.</text>
</comment>
<comment type="domain">
    <text evidence="2">The SAH (single alpha-helix) region is characterized by a high content of charged residues which are predicted to stabilize the alpha-helical structure by ionic bonds. It can refold after extension suggesting an in vivo force-dependent function. The isolated SAH domain is monomeric.</text>
</comment>
<comment type="PTM">
    <text evidence="7 10 19">Phosphorylation by AURKB or AURKC at its C-terminal part is important for AURKB or AURKC activation by INCENP.</text>
</comment>
<comment type="similarity">
    <text evidence="22">Belongs to the INCENP family.</text>
</comment>
<comment type="caution">
    <text evidence="22">PubMed:11139336 experiments have been carried out partly in chicken and partly in human.</text>
</comment>
<comment type="caution">
    <text evidence="2">Originally predicted to contain a coiled coil domain but shown to contain a stable SAH domain instead.</text>
</comment>
<protein>
    <recommendedName>
        <fullName>Inner centromere protein</fullName>
    </recommendedName>
</protein>
<sequence>MGTTAPGPIHLLELCDQKLMEFLCNMDNKDLVWLEEIQEEAERMFTREFSKEPELMPKTPSQKNRRKKRRISYVQDENRDPIRRRLSRRKSRSSQLSSRRLRSKDSVEKLATVVGENGSVLRRVTRAAAAAAAATMALAAPSSPTPESPTMLTKKPEDNHTQCQLVPVVEIGISERQNAEQHVTQLMSTEPLPRTLSPTPASATAPTSQGIPTSDEESTPKKSKARILESITVSSLMATPQDPKGQGVGTGRSASKLRIAQVSPGPRDSPAFPDSPWRERVLAPILPDNFSTPTGSRTDSQSVRHSPIAPSSPSPQVLAQKYSLVAKQESVVRRASRRLAKKTAEEPAASGRIICHSYLERLLNVEVPQKVGSEQKEPPEEAEPVAAAEPEVPENNGNNSWPHNDTEIANSTPNPKPAASSPETPSAGQQEAKTDQADGPREPPQSARRKRSYKQAVSELDEEQHLEDEELQPPRSKTPSSPCPASKVVRPLRTFLHTVQRNQMLMTPTSAPRSVMKSFIKRNTPLRMDPKCSFVEKERQRLENLRRKEEAEQLRRQKVEEDKRRRLEEVKLKREERLRKVLQARERVEQMKEEKKKQIEQKFAQIDEKTEKAKEERLAEEKAKKKAAAKKMEEVEARRKQEEEARRLRWLQQEEEERRHQELLQKKKEEEQERLRKAAEAKRLAEQREQERREQERREQERREQERREQERREQERQLAEQERRREQERLQAERELQEREKALRLQKEQLQRELEEKKKKEEQQRLAERQLQEEQEKKAKEAAGASKALNVTVDVQSPACTSYQMTPQGHRAPPKINPDNYGMDLNSDDSTDDEAHPRKPIPTWARGTPLSQAIIHQYYHPPNLLELFGTILPLDLEDIFKKSKPRYHKRTSSAVWNSPPLQGARVPSSLAYSLKKH</sequence>
<gene>
    <name type="primary">INCENP</name>
</gene>
<feature type="chain" id="PRO_0000084201" description="Inner centromere protein">
    <location>
        <begin position="1"/>
        <end position="918"/>
    </location>
</feature>
<feature type="region of interest" description="Disordered" evidence="4">
    <location>
        <begin position="48"/>
        <end position="105"/>
    </location>
</feature>
<feature type="region of interest" description="Interaction with CBX5" evidence="17">
    <location>
        <begin position="124"/>
        <end position="248"/>
    </location>
</feature>
<feature type="region of interest" description="Disordered" evidence="4">
    <location>
        <begin position="138"/>
        <end position="159"/>
    </location>
</feature>
<feature type="region of interest" description="Disordered" evidence="4">
    <location>
        <begin position="190"/>
        <end position="253"/>
    </location>
</feature>
<feature type="region of interest" description="Disordered" evidence="4">
    <location>
        <begin position="285"/>
        <end position="316"/>
    </location>
</feature>
<feature type="region of interest" description="Disordered" evidence="4">
    <location>
        <begin position="371"/>
        <end position="489"/>
    </location>
</feature>
<feature type="region of interest" description="SAH" evidence="2">
    <location>
        <begin position="531"/>
        <end position="765"/>
    </location>
</feature>
<feature type="region of interest" description="Disordered" evidence="4">
    <location>
        <begin position="607"/>
        <end position="640"/>
    </location>
</feature>
<feature type="region of interest" description="Disordered" evidence="4">
    <location>
        <begin position="660"/>
        <end position="740"/>
    </location>
</feature>
<feature type="region of interest" description="Disordered" evidence="4">
    <location>
        <begin position="754"/>
        <end position="787"/>
    </location>
</feature>
<feature type="region of interest" description="Interaction with AURKC" evidence="19">
    <location>
        <begin position="822"/>
        <end position="897"/>
    </location>
</feature>
<feature type="region of interest" description="IN box" evidence="22">
    <location>
        <begin position="826"/>
        <end position="900"/>
    </location>
</feature>
<feature type="region of interest" description="Disordered" evidence="4">
    <location>
        <begin position="826"/>
        <end position="845"/>
    </location>
</feature>
<feature type="short sequence motif" description="PXVXL/I motif" evidence="23">
    <location>
        <begin position="167"/>
        <end position="171"/>
    </location>
</feature>
<feature type="compositionally biased region" description="Low complexity" evidence="4">
    <location>
        <begin position="197"/>
        <end position="208"/>
    </location>
</feature>
<feature type="compositionally biased region" description="Polar residues" evidence="4">
    <location>
        <begin position="289"/>
        <end position="316"/>
    </location>
</feature>
<feature type="compositionally biased region" description="Low complexity" evidence="4">
    <location>
        <begin position="384"/>
        <end position="394"/>
    </location>
</feature>
<feature type="compositionally biased region" description="Polar residues" evidence="4">
    <location>
        <begin position="395"/>
        <end position="413"/>
    </location>
</feature>
<feature type="compositionally biased region" description="Polar residues" evidence="4">
    <location>
        <begin position="421"/>
        <end position="431"/>
    </location>
</feature>
<feature type="compositionally biased region" description="Basic and acidic residues" evidence="4">
    <location>
        <begin position="432"/>
        <end position="441"/>
    </location>
</feature>
<feature type="compositionally biased region" description="Acidic residues" evidence="4">
    <location>
        <begin position="459"/>
        <end position="471"/>
    </location>
</feature>
<feature type="compositionally biased region" description="Basic and acidic residues" evidence="4">
    <location>
        <begin position="607"/>
        <end position="623"/>
    </location>
</feature>
<feature type="compositionally biased region" description="Basic and acidic residues" evidence="4">
    <location>
        <begin position="630"/>
        <end position="640"/>
    </location>
</feature>
<feature type="compositionally biased region" description="Basic and acidic residues" evidence="4">
    <location>
        <begin position="754"/>
        <end position="782"/>
    </location>
</feature>
<feature type="modified residue" description="Phosphoserine" evidence="31">
    <location>
        <position position="72"/>
    </location>
</feature>
<feature type="modified residue" description="Phosphoserine" evidence="25 29 31">
    <location>
        <position position="119"/>
    </location>
</feature>
<feature type="modified residue" description="Phosphoserine" evidence="29">
    <location>
        <position position="143"/>
    </location>
</feature>
<feature type="modified residue" description="Phosphoserine" evidence="25">
    <location>
        <position position="148"/>
    </location>
</feature>
<feature type="modified residue" description="Phosphothreonine" evidence="3">
    <location>
        <position position="150"/>
    </location>
</feature>
<feature type="modified residue" description="Phosphothreonine" evidence="10">
    <location>
        <position position="195"/>
    </location>
</feature>
<feature type="modified residue" description="Phosphoserine" evidence="28">
    <location>
        <position position="197"/>
    </location>
</feature>
<feature type="modified residue" description="Phosphothreonine" evidence="28">
    <location>
        <position position="199"/>
    </location>
</feature>
<feature type="modified residue" description="Phosphothreonine" evidence="28">
    <location>
        <position position="213"/>
    </location>
</feature>
<feature type="modified residue" description="Phosphoserine" evidence="28">
    <location>
        <position position="214"/>
    </location>
</feature>
<feature type="modified residue" description="Phosphothreonine" evidence="3">
    <location>
        <position position="219"/>
    </location>
</feature>
<feature type="modified residue" description="Phosphothreonine" evidence="25 26 28 29">
    <location>
        <position position="239"/>
    </location>
</feature>
<feature type="modified residue" description="Phosphoserine" evidence="24 26 27 29 30 31">
    <location>
        <position position="263"/>
    </location>
</feature>
<feature type="modified residue" description="Phosphoserine" evidence="26">
    <location>
        <position position="269"/>
    </location>
</feature>
<feature type="modified residue" description="Phosphoserine" evidence="24 26 29 31">
    <location>
        <position position="275"/>
    </location>
</feature>
<feature type="modified residue" description="Phosphothreonine" evidence="25 29 31">
    <location>
        <position position="292"/>
    </location>
</feature>
<feature type="modified residue" description="Phosphoserine" evidence="25">
    <location>
        <position position="296"/>
    </location>
</feature>
<feature type="modified residue" description="Phosphoserine" evidence="25 26 28 30 31">
    <location>
        <position position="306"/>
    </location>
</feature>
<feature type="modified residue" description="Phosphoserine" evidence="25 29">
    <location>
        <position position="312"/>
    </location>
</feature>
<feature type="modified residue" description="Phosphoserine" evidence="25 28 29 30">
    <location>
        <position position="314"/>
    </location>
</feature>
<feature type="modified residue" description="Phosphoserine" evidence="29">
    <location>
        <position position="330"/>
    </location>
</feature>
<feature type="modified residue" description="Phosphoserine" evidence="26">
    <location>
        <position position="400"/>
    </location>
</feature>
<feature type="modified residue" description="Phosphothreonine" evidence="26">
    <location>
        <position position="406"/>
    </location>
</feature>
<feature type="modified residue" description="Phosphoserine" evidence="25 31">
    <location>
        <position position="446"/>
    </location>
</feature>
<feature type="modified residue" description="Phosphoserine" evidence="26">
    <location>
        <position position="476"/>
    </location>
</feature>
<feature type="modified residue" description="Phosphothreonine" evidence="3">
    <location>
        <position position="478"/>
    </location>
</feature>
<feature type="modified residue" description="Phosphoserine" evidence="3">
    <location>
        <position position="480"/>
    </location>
</feature>
<feature type="modified residue" description="Phosphoserine" evidence="25">
    <location>
        <position position="510"/>
    </location>
</feature>
<feature type="modified residue" description="Phosphoserine" evidence="25">
    <location>
        <position position="514"/>
    </location>
</feature>
<feature type="modified residue" description="Phosphoserine" evidence="25 27 28 30">
    <location>
        <position position="828"/>
    </location>
</feature>
<feature type="modified residue" description="Phosphoserine" evidence="25 28">
    <location>
        <position position="831"/>
    </location>
</feature>
<feature type="modified residue" description="Phosphothreonine" evidence="25 28">
    <location>
        <position position="832"/>
    </location>
</feature>
<feature type="modified residue" description="Phosphothreonine; by AURKB and AURKC" evidence="7 19">
    <location>
        <position position="892"/>
    </location>
</feature>
<feature type="modified residue" description="Phosphoserine; by AURKB and AURKC" evidence="7 19">
    <location>
        <position position="893"/>
    </location>
</feature>
<feature type="modified residue" description="Phosphoserine; by AURKB and AURKC" evidence="7 19 25 31">
    <location>
        <position position="894"/>
    </location>
</feature>
<feature type="modified residue" description="Phosphoserine" evidence="25 26 27 28 29 31">
    <location>
        <position position="899"/>
    </location>
</feature>
<feature type="modified residue" description="Phosphoserine" evidence="25 31">
    <location>
        <position position="914"/>
    </location>
</feature>
<feature type="splice variant" id="VSP_035651" description="In isoform 2." evidence="21">
    <location>
        <begin position="532"/>
        <end position="535"/>
    </location>
</feature>
<feature type="sequence variant" id="VAR_047127" description="In dbSNP:rs1792947.">
    <original>G</original>
    <variation>V</variation>
    <location>
        <position position="2"/>
    </location>
</feature>
<feature type="sequence variant" id="VAR_047128" description="In dbSNP:rs12281503.">
    <original>R</original>
    <variation>H</variation>
    <location>
        <position position="100"/>
    </location>
</feature>
<feature type="sequence variant" id="VAR_047129" description="In dbSNP:rs34441559.">
    <original>A</original>
    <variation>V</variation>
    <location>
        <position position="137"/>
    </location>
</feature>
<feature type="sequence variant" id="VAR_047130" description="In dbSNP:rs2277283.">
    <original>M</original>
    <variation>T</variation>
    <location>
        <position position="506"/>
    </location>
</feature>
<feature type="sequence variant" id="VAR_047131" description="In dbSNP:rs7129085." evidence="6 10 11">
    <original>E</original>
    <variation>D</variation>
    <location>
        <position position="644"/>
    </location>
</feature>
<feature type="mutagenesis site" description="Loss of binding to CDCA8 and BIRC5; when associated with R-34." evidence="14">
    <original>F</original>
    <variation>R</variation>
    <location>
        <position position="22"/>
    </location>
</feature>
<feature type="mutagenesis site" description="Loss of binding to CDCA8 and BIRC5; when associated with R-22." evidence="14">
    <original>L</original>
    <variation>R</variation>
    <location>
        <position position="34"/>
    </location>
</feature>
<feature type="mutagenesis site" description="Loss of localization to the central spindle and midbody in anaphase or cytokinesis; when associated with R-36; R-39 and R-40." evidence="14">
    <original>E</original>
    <variation>R</variation>
    <location>
        <position position="35"/>
    </location>
</feature>
<feature type="mutagenesis site" description="Loss of localization to the central spindle and midbody in anaphase or cytokinesis; when associated with R-35; R-39 and R-40." evidence="14">
    <original>E</original>
    <variation>R</variation>
    <location>
        <position position="36"/>
    </location>
</feature>
<feature type="mutagenesis site" description="Loss of localization to the central spindle and midbody in anaphase or cytokinesis; when associated with R-35; R-36 and R-40." evidence="14">
    <original>E</original>
    <variation>R</variation>
    <location>
        <position position="39"/>
    </location>
</feature>
<feature type="mutagenesis site" description="Loss of localization to the central spindle and midbody in anaphase or cytokinesis; when associated with R-35; R-36 and R-39." evidence="14">
    <original>E</original>
    <variation>R</variation>
    <location>
        <position position="40"/>
    </location>
</feature>
<feature type="mutagenesis site" description="Decreases interaction with CBX5, abolishes localization to centromeres in interphase; when associated with A-169 and A-171." evidence="17">
    <original>P</original>
    <variation>A</variation>
    <location>
        <position position="167"/>
    </location>
</feature>
<feature type="mutagenesis site" description="Decreases interaction with CBX5, abolishes localization to centromeres in interphase; when associated with A-167 and A-171." evidence="17">
    <original>V</original>
    <variation>A</variation>
    <location>
        <position position="169"/>
    </location>
</feature>
<feature type="mutagenesis site" description="Abolishes interaction with CBX5." evidence="15">
    <original>V</original>
    <variation>E</variation>
    <location>
        <position position="169"/>
    </location>
</feature>
<feature type="mutagenesis site" description="Decreases interaction with CBX5, abolishes localization to centromeres in interphase; when associated with A-167 and A-169." evidence="17">
    <original>I</original>
    <variation>A</variation>
    <location>
        <position position="171"/>
    </location>
</feature>
<feature type="mutagenesis site" description="Abolishes interaction with CBX5 and AURKB." evidence="15">
    <original>I</original>
    <variation>E</variation>
    <location>
        <position position="171"/>
    </location>
</feature>
<feature type="sequence conflict" description="In Ref. 1; AAF87584." evidence="22" ref="1">
    <original>Q</original>
    <variation>QERREQ</variation>
    <location>
        <position position="715"/>
    </location>
</feature>
<feature type="sequence conflict" description="In Ref. 1; AAF87584." evidence="22" ref="1">
    <original>YQM</original>
    <variation>SPI</variation>
    <location>
        <begin position="804"/>
        <end position="806"/>
    </location>
</feature>
<feature type="sequence conflict" description="In Ref. 1; AAF87584." evidence="22" ref="1">
    <original>R</original>
    <variation>K</variation>
    <location>
        <position position="812"/>
    </location>
</feature>
<feature type="sequence conflict" description="In Ref. 1; AAF87584." evidence="22" ref="1">
    <original>K</original>
    <variation>Q</variation>
    <location>
        <position position="816"/>
    </location>
</feature>
<feature type="sequence conflict" description="In Ref. 1; AAF87584." evidence="22" ref="1">
    <original>D</original>
    <variation>H</variation>
    <location>
        <position position="820"/>
    </location>
</feature>
<feature type="sequence conflict" description="In Ref. 1; AAF87584." evidence="22" ref="1">
    <original>H</original>
    <variation>Q</variation>
    <location>
        <position position="861"/>
    </location>
</feature>
<feature type="helix" evidence="32">
    <location>
        <begin position="8"/>
        <end position="10"/>
    </location>
</feature>
<feature type="helix" evidence="32">
    <location>
        <begin position="11"/>
        <end position="28"/>
    </location>
</feature>
<feature type="helix" evidence="32">
    <location>
        <begin position="30"/>
        <end position="45"/>
    </location>
</feature>
<feature type="helix" evidence="33">
    <location>
        <begin position="844"/>
        <end position="846"/>
    </location>
</feature>
<feature type="helix" evidence="33">
    <location>
        <begin position="848"/>
        <end position="860"/>
    </location>
</feature>
<feature type="helix" evidence="33">
    <location>
        <begin position="865"/>
        <end position="869"/>
    </location>
</feature>
<feature type="helix" evidence="33">
    <location>
        <begin position="877"/>
        <end position="881"/>
    </location>
</feature>
<feature type="helix" evidence="33">
    <location>
        <begin position="886"/>
        <end position="889"/>
    </location>
</feature>
<feature type="helix" evidence="33">
    <location>
        <begin position="893"/>
        <end position="895"/>
    </location>
</feature>
<organism>
    <name type="scientific">Homo sapiens</name>
    <name type="common">Human</name>
    <dbReference type="NCBI Taxonomy" id="9606"/>
    <lineage>
        <taxon>Eukaryota</taxon>
        <taxon>Metazoa</taxon>
        <taxon>Chordata</taxon>
        <taxon>Craniata</taxon>
        <taxon>Vertebrata</taxon>
        <taxon>Euteleostomi</taxon>
        <taxon>Mammalia</taxon>
        <taxon>Eutheria</taxon>
        <taxon>Euarchontoglires</taxon>
        <taxon>Primates</taxon>
        <taxon>Haplorrhini</taxon>
        <taxon>Catarrhini</taxon>
        <taxon>Hominidae</taxon>
        <taxon>Homo</taxon>
    </lineage>
</organism>
<reference key="1">
    <citation type="journal article" date="2001" name="Chromosoma">
        <title>Human INCENP colocalizes with the Aurora-B/AIRK2 kinase on chromosomes and is overexpressed in tumour cells.</title>
        <authorList>
            <person name="Adams R.R."/>
            <person name="Eckley D.M."/>
            <person name="Vagnarelli P."/>
            <person name="Wheatley S.P."/>
            <person name="Gerloff D.L."/>
            <person name="Mackay A.M."/>
            <person name="Svingen P.A."/>
            <person name="Kaufmann S.H."/>
            <person name="Earnshaw W.C."/>
        </authorList>
    </citation>
    <scope>NUCLEOTIDE SEQUENCE [MRNA] (ISOFORM 2)</scope>
    <scope>SUBCELLULAR LOCATION</scope>
    <scope>VARIANT ASP-644</scope>
    <source>
        <tissue>Cervix carcinoma</tissue>
    </source>
</reference>
<reference key="2">
    <citation type="journal article" date="2004" name="J. Biol. Chem.">
        <title>Direct association with inner centromere protein (INCENP) activates the novel chromosomal passenger protein, Aurora-C.</title>
        <authorList>
            <person name="Li X."/>
            <person name="Sakashita G."/>
            <person name="Matsuzaki H."/>
            <person name="Sugimoto K."/>
            <person name="Kimura K."/>
            <person name="Hanaoka F."/>
            <person name="Taniguchi H."/>
            <person name="Furukawa K."/>
            <person name="Urano T."/>
        </authorList>
    </citation>
    <scope>NUCLEOTIDE SEQUENCE [MRNA] (ISOFORM 1)</scope>
    <scope>FUNCTION</scope>
    <scope>INTERACTION WITH AURKB AND AURKC</scope>
    <scope>SUBCELLULAR LOCATION</scope>
    <scope>PHOSPHORYLATION AT THR-195</scope>
    <scope>VARIANT ASP-644</scope>
    <source>
        <tissue>Testis</tissue>
    </source>
</reference>
<reference key="3">
    <citation type="journal article" date="2006" name="Nature">
        <title>Human chromosome 11 DNA sequence and analysis including novel gene identification.</title>
        <authorList>
            <person name="Taylor T.D."/>
            <person name="Noguchi H."/>
            <person name="Totoki Y."/>
            <person name="Toyoda A."/>
            <person name="Kuroki Y."/>
            <person name="Dewar K."/>
            <person name="Lloyd C."/>
            <person name="Itoh T."/>
            <person name="Takeda T."/>
            <person name="Kim D.-W."/>
            <person name="She X."/>
            <person name="Barlow K.F."/>
            <person name="Bloom T."/>
            <person name="Bruford E."/>
            <person name="Chang J.L."/>
            <person name="Cuomo C.A."/>
            <person name="Eichler E."/>
            <person name="FitzGerald M.G."/>
            <person name="Jaffe D.B."/>
            <person name="LaButti K."/>
            <person name="Nicol R."/>
            <person name="Park H.-S."/>
            <person name="Seaman C."/>
            <person name="Sougnez C."/>
            <person name="Yang X."/>
            <person name="Zimmer A.R."/>
            <person name="Zody M.C."/>
            <person name="Birren B.W."/>
            <person name="Nusbaum C."/>
            <person name="Fujiyama A."/>
            <person name="Hattori M."/>
            <person name="Rogers J."/>
            <person name="Lander E.S."/>
            <person name="Sakaki Y."/>
        </authorList>
    </citation>
    <scope>NUCLEOTIDE SEQUENCE [LARGE SCALE GENOMIC DNA]</scope>
</reference>
<reference key="4">
    <citation type="submission" date="2005-07" db="EMBL/GenBank/DDBJ databases">
        <authorList>
            <person name="Mural R.J."/>
            <person name="Istrail S."/>
            <person name="Sutton G.G."/>
            <person name="Florea L."/>
            <person name="Halpern A.L."/>
            <person name="Mobarry C.M."/>
            <person name="Lippert R."/>
            <person name="Walenz B."/>
            <person name="Shatkay H."/>
            <person name="Dew I."/>
            <person name="Miller J.R."/>
            <person name="Flanigan M.J."/>
            <person name="Edwards N.J."/>
            <person name="Bolanos R."/>
            <person name="Fasulo D."/>
            <person name="Halldorsson B.V."/>
            <person name="Hannenhalli S."/>
            <person name="Turner R."/>
            <person name="Yooseph S."/>
            <person name="Lu F."/>
            <person name="Nusskern D.R."/>
            <person name="Shue B.C."/>
            <person name="Zheng X.H."/>
            <person name="Zhong F."/>
            <person name="Delcher A.L."/>
            <person name="Huson D.H."/>
            <person name="Kravitz S.A."/>
            <person name="Mouchard L."/>
            <person name="Reinert K."/>
            <person name="Remington K.A."/>
            <person name="Clark A.G."/>
            <person name="Waterman M.S."/>
            <person name="Eichler E.E."/>
            <person name="Adams M.D."/>
            <person name="Hunkapiller M.W."/>
            <person name="Myers E.W."/>
            <person name="Venter J.C."/>
        </authorList>
    </citation>
    <scope>NUCLEOTIDE SEQUENCE [LARGE SCALE GENOMIC DNA]</scope>
</reference>
<reference key="5">
    <citation type="journal article" date="2004" name="Genome Res.">
        <title>The status, quality, and expansion of the NIH full-length cDNA project: the Mammalian Gene Collection (MGC).</title>
        <authorList>
            <consortium name="The MGC Project Team"/>
        </authorList>
    </citation>
    <scope>NUCLEOTIDE SEQUENCE [LARGE SCALE MRNA] (ISOFORM 1)</scope>
    <scope>VARIANT ASP-644</scope>
    <source>
        <tissue>Lung</tissue>
    </source>
</reference>
<reference key="6">
    <citation type="journal article" date="1998" name="J. Cell Biol.">
        <title>INCENP centromere and spindle targeting: identification of essential conserved motifs and involvement of heterochromatin protein HP1.</title>
        <authorList>
            <person name="Ainsztein A.M."/>
            <person name="Kandels-Lewis S.E."/>
            <person name="Mackay A.M."/>
            <person name="Earnshaw W.C."/>
        </authorList>
    </citation>
    <scope>INTERACTION WITH CBX3</scope>
</reference>
<reference key="7">
    <citation type="journal article" date="2001" name="Exp. Cell Res.">
        <title>INCENP binds directly to tubulin and requires dynamic microtubules to target to the cleavage furrow.</title>
        <authorList>
            <person name="Wheatley S.P."/>
            <person name="Kandels-Lewis S.E."/>
            <person name="Adams R.R."/>
            <person name="Ainsztein A.M."/>
            <person name="Earnshaw W.C."/>
        </authorList>
    </citation>
    <scope>INTERACTION WITH TUBULIN BETA CHAIN</scope>
</reference>
<reference key="8">
    <citation type="journal article" date="2003" name="Mol. Biol. Cell">
        <title>Exploring the functional interactions between Aurora B, INCENP, and survivin in mitosis.</title>
        <authorList>
            <person name="Honda R."/>
            <person name="Korner R."/>
            <person name="Nigg E.A."/>
        </authorList>
    </citation>
    <scope>IDENTIFICATION IN THE CPC COMPLEX</scope>
    <scope>FUNCTION OF THE CPC COMPLEX</scope>
    <scope>INDUCTION</scope>
    <scope>SUBCELLULAR LOCATION</scope>
    <scope>PHOSPHORYLATION AT THR-892; SER-893 AND SER-894</scope>
</reference>
<reference key="9">
    <citation type="journal article" date="2004" name="J. Biol. Chem.">
        <title>Aurora-B phosphorylation in vitro identifies a residue of survivin that is essential for its localization and binding to inner centromere protein (INCENP) in vivo.</title>
        <authorList>
            <person name="Wheatley S.P."/>
            <person name="Henzing A.J."/>
            <person name="Dodson H."/>
            <person name="Khaled W."/>
            <person name="Earnshaw W.C."/>
        </authorList>
    </citation>
    <scope>INTERACTION WITH BIRC5</scope>
</reference>
<reference key="10">
    <citation type="journal article" date="2004" name="J. Cell Biol.">
        <title>Borealin: a novel chromosomal passenger required for stability of the bipolar mitotic spindle.</title>
        <authorList>
            <person name="Gassmann R."/>
            <person name="Carvalho A."/>
            <person name="Henzing A.J."/>
            <person name="Ruchaud S."/>
            <person name="Hudson D.F."/>
            <person name="Honda R."/>
            <person name="Nigg E.A."/>
            <person name="Gerloff D.L."/>
            <person name="Earnshaw W.C."/>
        </authorList>
    </citation>
    <scope>INTERACTION WITH CDCA8</scope>
</reference>
<reference key="11">
    <citation type="journal article" date="2006" name="Cell">
        <title>Global, in vivo, and site-specific phosphorylation dynamics in signaling networks.</title>
        <authorList>
            <person name="Olsen J.V."/>
            <person name="Blagoev B."/>
            <person name="Gnad F."/>
            <person name="Macek B."/>
            <person name="Kumar C."/>
            <person name="Mortensen P."/>
            <person name="Mann M."/>
        </authorList>
    </citation>
    <scope>PHOSPHORYLATION [LARGE SCALE ANALYSIS] AT SER-263 AND SER-275</scope>
    <scope>IDENTIFICATION BY MASS SPECTROMETRY [LARGE SCALE ANALYSIS]</scope>
    <source>
        <tissue>Cervix carcinoma</tissue>
    </source>
</reference>
<reference key="12">
    <citation type="journal article" date="2006" name="Exp. Cell Res.">
        <title>EVI5 protein associates with the INCENP-aurora B kinase-survivin chromosomal passenger complex and is involved in the completion of cytokinesis.</title>
        <authorList>
            <person name="Faitar S.L."/>
            <person name="Sossey-Alaoui K."/>
            <person name="Ranalli T.A."/>
            <person name="Cowell J.K."/>
        </authorList>
    </citation>
    <scope>INTERACTION WITH EVI5</scope>
</reference>
<reference key="13">
    <citation type="journal article" date="2006" name="Mol. Biol. Cell">
        <title>Phosphorylation- and polo-box-dependent binding of Plk1 to Bub1 is required for the kinetochore localization of Plk1.</title>
        <authorList>
            <person name="Qi W."/>
            <person name="Tang Z."/>
            <person name="Yu H."/>
        </authorList>
    </citation>
    <scope>FUNCTION</scope>
    <scope>SUBCELLULAR LOCATION</scope>
</reference>
<reference key="14">
    <citation type="journal article" date="2006" name="Mol. Biol. Cell">
        <title>Centromere targeting of the chromosomal passenger complex requires a ternary subcomplex of borealin, survivin, and the N-terminal domain of INCENP.</title>
        <authorList>
            <person name="Klein U.R."/>
            <person name="Nigg E.A."/>
            <person name="Gruneberg U."/>
        </authorList>
    </citation>
    <scope>INTERACTION WITH BIRC5 AND CDCA8</scope>
</reference>
<reference key="15">
    <citation type="journal article" date="2008" name="J. Proteome Res.">
        <title>Combining protein-based IMAC, peptide-based IMAC, and MudPIT for efficient phosphoproteomic analysis.</title>
        <authorList>
            <person name="Cantin G.T."/>
            <person name="Yi W."/>
            <person name="Lu B."/>
            <person name="Park S.K."/>
            <person name="Xu T."/>
            <person name="Lee J.-D."/>
            <person name="Yates J.R. III"/>
        </authorList>
    </citation>
    <scope>IDENTIFICATION BY MASS SPECTROMETRY [LARGE SCALE ANALYSIS]</scope>
    <source>
        <tissue>Cervix carcinoma</tissue>
    </source>
</reference>
<reference key="16">
    <citation type="journal article" date="2008" name="Mol. Cell">
        <title>Kinase-selective enrichment enables quantitative phosphoproteomics of the kinome across the cell cycle.</title>
        <authorList>
            <person name="Daub H."/>
            <person name="Olsen J.V."/>
            <person name="Bairlein M."/>
            <person name="Gnad F."/>
            <person name="Oppermann F.S."/>
            <person name="Korner R."/>
            <person name="Greff Z."/>
            <person name="Keri G."/>
            <person name="Stemmann O."/>
            <person name="Mann M."/>
        </authorList>
    </citation>
    <scope>PHOSPHORYLATION [LARGE SCALE ANALYSIS] AT THR-239; SER-263; SER-269; SER-275; SER-306; SER-400; THR-406; SER-476 AND SER-899</scope>
    <scope>IDENTIFICATION BY MASS SPECTROMETRY [LARGE SCALE ANALYSIS]</scope>
    <source>
        <tissue>Cervix carcinoma</tissue>
    </source>
</reference>
<reference key="17">
    <citation type="journal article" date="2008" name="Proc. Natl. Acad. Sci. U.S.A.">
        <title>A quantitative atlas of mitotic phosphorylation.</title>
        <authorList>
            <person name="Dephoure N."/>
            <person name="Zhou C."/>
            <person name="Villen J."/>
            <person name="Beausoleil S.A."/>
            <person name="Bakalarski C.E."/>
            <person name="Elledge S.J."/>
            <person name="Gygi S.P."/>
        </authorList>
    </citation>
    <scope>PHOSPHORYLATION [LARGE SCALE ANALYSIS] AT SER-119; SER-148; THR-239; THR-292; SER-296; SER-306; SER-312; SER-314; SER-446; SER-510; SER-514; SER-828; SER-831; THR-832; SER-894; SER-899 AND SER-914</scope>
    <scope>IDENTIFICATION BY MASS SPECTROMETRY [LARGE SCALE ANALYSIS]</scope>
    <source>
        <tissue>Cervix carcinoma</tissue>
    </source>
</reference>
<reference key="18">
    <citation type="journal article" date="2009" name="Anal. Chem.">
        <title>Lys-N and trypsin cover complementary parts of the phosphoproteome in a refined SCX-based approach.</title>
        <authorList>
            <person name="Gauci S."/>
            <person name="Helbig A.O."/>
            <person name="Slijper M."/>
            <person name="Krijgsveld J."/>
            <person name="Heck A.J."/>
            <person name="Mohammed S."/>
        </authorList>
    </citation>
    <scope>IDENTIFICATION BY MASS SPECTROMETRY [LARGE SCALE ANALYSIS]</scope>
</reference>
<reference key="19">
    <citation type="journal article" date="2009" name="Mol. Cell. Proteomics">
        <title>Large-scale proteomics analysis of the human kinome.</title>
        <authorList>
            <person name="Oppermann F.S."/>
            <person name="Gnad F."/>
            <person name="Olsen J.V."/>
            <person name="Hornberger R."/>
            <person name="Greff Z."/>
            <person name="Keri G."/>
            <person name="Mann M."/>
            <person name="Daub H."/>
        </authorList>
    </citation>
    <scope>PHOSPHORYLATION [LARGE SCALE ANALYSIS] AT SER-263; SER-828 AND SER-899</scope>
    <scope>IDENTIFICATION BY MASS SPECTROMETRY [LARGE SCALE ANALYSIS]</scope>
</reference>
<reference key="20">
    <citation type="journal article" date="2009" name="Sci. Signal.">
        <title>Quantitative phosphoproteomic analysis of T cell receptor signaling reveals system-wide modulation of protein-protein interactions.</title>
        <authorList>
            <person name="Mayya V."/>
            <person name="Lundgren D.H."/>
            <person name="Hwang S.-I."/>
            <person name="Rezaul K."/>
            <person name="Wu L."/>
            <person name="Eng J.K."/>
            <person name="Rodionov V."/>
            <person name="Han D.K."/>
        </authorList>
    </citation>
    <scope>PHOSPHORYLATION [LARGE SCALE ANALYSIS] AT SER-197; THR-199; THR-213; SER-214; THR-239; SER-306; SER-314; SER-828; SER-831; THR-832 AND SER-899</scope>
    <scope>IDENTIFICATION BY MASS SPECTROMETRY [LARGE SCALE ANALYSIS]</scope>
    <source>
        <tissue>Leukemic T-cell</tissue>
    </source>
</reference>
<reference key="21">
    <citation type="journal article" date="2010" name="Nat. Cell Biol.">
        <title>Human POGZ modulates dissociation of HP1alpha from mitotic chromosome arms through Aurora B activation.</title>
        <authorList>
            <person name="Nozawa R.S."/>
            <person name="Nagao K."/>
            <person name="Masuda H.T."/>
            <person name="Iwasaki O."/>
            <person name="Hirota T."/>
            <person name="Nozaki N."/>
            <person name="Kimura H."/>
            <person name="Obuse C."/>
        </authorList>
    </citation>
    <scope>INTERACTION WITH CBX5; POGZ AND AURKB</scope>
    <scope>MUTAGENESIS OF VAL-169 AND ILE-171</scope>
</reference>
<reference key="22">
    <citation type="journal article" date="2010" name="Sci. Signal.">
        <title>Quantitative phosphoproteomics reveals widespread full phosphorylation site occupancy during mitosis.</title>
        <authorList>
            <person name="Olsen J.V."/>
            <person name="Vermeulen M."/>
            <person name="Santamaria A."/>
            <person name="Kumar C."/>
            <person name="Miller M.L."/>
            <person name="Jensen L.J."/>
            <person name="Gnad F."/>
            <person name="Cox J."/>
            <person name="Jensen T.S."/>
            <person name="Nigg E.A."/>
            <person name="Brunak S."/>
            <person name="Mann M."/>
        </authorList>
    </citation>
    <scope>PHOSPHORYLATION [LARGE SCALE ANALYSIS] AT SER-119; SER-143; THR-239; SER-263; SER-275; THR-292; SER-312; SER-314; SER-330 AND SER-899</scope>
    <scope>IDENTIFICATION BY MASS SPECTROMETRY [LARGE SCALE ANALYSIS]</scope>
    <source>
        <tissue>Cervix carcinoma</tissue>
    </source>
</reference>
<reference key="23">
    <citation type="journal article" date="2011" name="Int. J. Oncol.">
        <title>PAR, a protein involved in the cell cycle, is functionally related to chromosomal passenger proteins.</title>
        <authorList>
            <person name="Platica M."/>
            <person name="Ionescu A."/>
            <person name="Ivan E."/>
            <person name="Holland J.F."/>
            <person name="Mandeli J."/>
            <person name="Platica O."/>
        </authorList>
    </citation>
    <scope>INTERACTION WITH JTB</scope>
</reference>
<reference key="24">
    <citation type="journal article" date="2011" name="Mol. Biol. Cell">
        <title>Mitotic centromeric targeting of HP1 and its binding to Sgo1 are dispensable for sister-chromatid cohesion in human cells.</title>
        <authorList>
            <person name="Kang J."/>
            <person name="Chaudhary J."/>
            <person name="Dong H."/>
            <person name="Kim S."/>
            <person name="Brautigam C.A."/>
            <person name="Yu H."/>
        </authorList>
    </citation>
    <scope>FUNCTION</scope>
    <scope>INTERACTION WITH CBX1; CBX3 AND CBX5</scope>
    <scope>MUTAGENESIS OF PRO-167; VAL-169 AND ILE-171</scope>
</reference>
<reference key="25">
    <citation type="journal article" date="2011" name="Sci. Signal.">
        <title>System-wide temporal characterization of the proteome and phosphoproteome of human embryonic stem cell differentiation.</title>
        <authorList>
            <person name="Rigbolt K.T."/>
            <person name="Prokhorova T.A."/>
            <person name="Akimov V."/>
            <person name="Henningsen J."/>
            <person name="Johansen P.T."/>
            <person name="Kratchmarova I."/>
            <person name="Kassem M."/>
            <person name="Mann M."/>
            <person name="Olsen J.V."/>
            <person name="Blagoev B."/>
        </authorList>
    </citation>
    <scope>PHOSPHORYLATION [LARGE SCALE ANALYSIS] AT SER-263; SER-306; SER-314 AND SER-828</scope>
    <scope>IDENTIFICATION BY MASS SPECTROMETRY [LARGE SCALE ANALYSIS]</scope>
</reference>
<reference key="26">
    <citation type="journal article" date="2013" name="J. Proteome Res.">
        <title>Toward a comprehensive characterization of a human cancer cell phosphoproteome.</title>
        <authorList>
            <person name="Zhou H."/>
            <person name="Di Palma S."/>
            <person name="Preisinger C."/>
            <person name="Peng M."/>
            <person name="Polat A.N."/>
            <person name="Heck A.J."/>
            <person name="Mohammed S."/>
        </authorList>
    </citation>
    <scope>PHOSPHORYLATION [LARGE SCALE ANALYSIS] AT SER-72; SER-119; SER-263; SER-275; THR-292; SER-306; SER-446; SER-894; SER-899 AND SER-914</scope>
    <scope>IDENTIFICATION BY MASS SPECTROMETRY [LARGE SCALE ANALYSIS]</scope>
    <source>
        <tissue>Cervix carcinoma</tissue>
        <tissue>Erythroleukemia</tissue>
    </source>
</reference>
<reference key="27">
    <citation type="journal article" date="2016" name="PLoS ONE">
        <title>Aurora-C interactions with survivin and INCENP reveal shared and distinct features compared with Aurora-B chromosome passenger protein complex.</title>
        <authorList>
            <person name="Sasai K."/>
            <person name="Katayama H."/>
            <person name="Hawke D.H."/>
            <person name="Sen S."/>
        </authorList>
    </citation>
    <scope>INTERACTION WITH AURKC</scope>
    <scope>FUNCTION</scope>
    <scope>PHOSPHORYLATION AT THR-892; SER-893 AND SER-894</scope>
</reference>
<reference key="28">
    <citation type="journal article" date="2007" name="Cell">
        <title>Structure of a Survivin-Borealin-INCENP core complex reveals how chromosomal passengers travel together.</title>
        <authorList>
            <person name="Jeyaprakash A.A."/>
            <person name="Klein U.R."/>
            <person name="Lindner D."/>
            <person name="Ebert J."/>
            <person name="Nigg E.A."/>
            <person name="Conti E."/>
        </authorList>
    </citation>
    <scope>X-RAY CRYSTALLOGRAPHY (1.8 ANGSTROMS) OF 3-46</scope>
    <scope>INTERACTION WITH CDCA8 AND BIRC5</scope>
    <scope>MUTAGENESIS OF PHE-22; LEU-34; GLU-35; GLU-36; GLU-39 AND GLU-40</scope>
</reference>
<reference key="29">
    <citation type="journal article" date="2012" name="J. Med. Chem.">
        <title>Crystal structure of human aurora B in complex with INCENP and VX-680.</title>
        <authorList>
            <person name="Elkins J.M."/>
            <person name="Santaguida S."/>
            <person name="Musacchio A."/>
            <person name="Knapp S."/>
        </authorList>
    </citation>
    <scope>X-RAY CRYSTALLOGRAPHY (2.75 ANGSTROMS) OF 835-903 IN COMPLEX WITH AURKB</scope>
</reference>
<dbReference type="EMBL" id="AF282265">
    <property type="protein sequence ID" value="AAF87584.1"/>
    <property type="molecule type" value="mRNA"/>
</dbReference>
<dbReference type="EMBL" id="AY714053">
    <property type="protein sequence ID" value="AAU04398.1"/>
    <property type="molecule type" value="mRNA"/>
</dbReference>
<dbReference type="EMBL" id="AP002793">
    <property type="status" value="NOT_ANNOTATED_CDS"/>
    <property type="molecule type" value="Genomic_DNA"/>
</dbReference>
<dbReference type="EMBL" id="CH471076">
    <property type="protein sequence ID" value="EAW74004.1"/>
    <property type="molecule type" value="Genomic_DNA"/>
</dbReference>
<dbReference type="EMBL" id="BC098576">
    <property type="protein sequence ID" value="AAH98576.1"/>
    <property type="molecule type" value="mRNA"/>
</dbReference>
<dbReference type="CCDS" id="CCDS31582.1">
    <molecule id="Q9NQS7-2"/>
</dbReference>
<dbReference type="CCDS" id="CCDS44624.1">
    <molecule id="Q9NQS7-1"/>
</dbReference>
<dbReference type="RefSeq" id="NP_001035784.1">
    <molecule id="Q9NQS7-1"/>
    <property type="nucleotide sequence ID" value="NM_001040694.2"/>
</dbReference>
<dbReference type="RefSeq" id="NP_064623.2">
    <molecule id="Q9NQS7-2"/>
    <property type="nucleotide sequence ID" value="NM_020238.3"/>
</dbReference>
<dbReference type="PDB" id="2QFA">
    <property type="method" value="X-ray"/>
    <property type="resolution" value="1.40 A"/>
    <property type="chains" value="C=1-47"/>
</dbReference>
<dbReference type="PDB" id="4AF3">
    <property type="method" value="X-ray"/>
    <property type="resolution" value="2.75 A"/>
    <property type="chains" value="D=835-903"/>
</dbReference>
<dbReference type="PDB" id="5IEH">
    <property type="method" value="X-ray"/>
    <property type="resolution" value="1.50 A"/>
    <property type="chains" value="C=47-55"/>
</dbReference>
<dbReference type="PDB" id="5IEK">
    <property type="method" value="X-ray"/>
    <property type="resolution" value="1.80 A"/>
    <property type="chains" value="C=47-55"/>
</dbReference>
<dbReference type="PDB" id="6GR8">
    <property type="method" value="X-ray"/>
    <property type="resolution" value="1.75 A"/>
    <property type="chains" value="B=835-903"/>
</dbReference>
<dbReference type="PDB" id="6GR9">
    <property type="method" value="X-ray"/>
    <property type="resolution" value="2.25 A"/>
    <property type="chains" value="B=835-903"/>
</dbReference>
<dbReference type="PDB" id="6YIE">
    <property type="method" value="X-ray"/>
    <property type="resolution" value="3.49 A"/>
    <property type="chains" value="C/F=1-58"/>
</dbReference>
<dbReference type="PDB" id="6YIF">
    <property type="method" value="X-ray"/>
    <property type="resolution" value="1.81 A"/>
    <property type="chains" value="C=7-57"/>
</dbReference>
<dbReference type="PDB" id="6YIH">
    <property type="method" value="X-ray"/>
    <property type="resolution" value="2.55 A"/>
    <property type="chains" value="C=5-80"/>
</dbReference>
<dbReference type="PDB" id="8RUP">
    <property type="method" value="EM"/>
    <property type="resolution" value="2.42 A"/>
    <property type="chains" value="M=1-80"/>
</dbReference>
<dbReference type="PDB" id="9ESA">
    <property type="method" value="X-ray"/>
    <property type="resolution" value="2.80 A"/>
    <property type="chains" value="CCC/DDD=834-891"/>
</dbReference>
<dbReference type="PDBsum" id="2QFA"/>
<dbReference type="PDBsum" id="4AF3"/>
<dbReference type="PDBsum" id="5IEH"/>
<dbReference type="PDBsum" id="5IEK"/>
<dbReference type="PDBsum" id="6GR8"/>
<dbReference type="PDBsum" id="6GR9"/>
<dbReference type="PDBsum" id="6YIE"/>
<dbReference type="PDBsum" id="6YIF"/>
<dbReference type="PDBsum" id="6YIH"/>
<dbReference type="PDBsum" id="8RUP"/>
<dbReference type="PDBsum" id="9ESA"/>
<dbReference type="EMDB" id="EMD-19513"/>
<dbReference type="SMR" id="Q9NQS7"/>
<dbReference type="BioGRID" id="109831">
    <property type="interactions" value="82"/>
</dbReference>
<dbReference type="ComplexPortal" id="CPX-116">
    <property type="entry name" value="Chromosomal passenger complex"/>
</dbReference>
<dbReference type="CORUM" id="Q9NQS7"/>
<dbReference type="DIP" id="DIP-31304N"/>
<dbReference type="FunCoup" id="Q9NQS7">
    <property type="interactions" value="1127"/>
</dbReference>
<dbReference type="IntAct" id="Q9NQS7">
    <property type="interactions" value="42"/>
</dbReference>
<dbReference type="MINT" id="Q9NQS7"/>
<dbReference type="STRING" id="9606.ENSP00000378295"/>
<dbReference type="BindingDB" id="Q9NQS7"/>
<dbReference type="ChEMBL" id="CHEMBL3430907"/>
<dbReference type="ChEMBL" id="CHEMBL4106141"/>
<dbReference type="DrugBank" id="DB07340">
    <property type="generic name" value="Reversine"/>
</dbReference>
<dbReference type="GlyGen" id="Q9NQS7">
    <property type="glycosylation" value="6 sites, 1 N-linked glycan (1 site), 1 O-linked glycan (3 sites)"/>
</dbReference>
<dbReference type="iPTMnet" id="Q9NQS7"/>
<dbReference type="PhosphoSitePlus" id="Q9NQS7"/>
<dbReference type="SwissPalm" id="Q9NQS7"/>
<dbReference type="BioMuta" id="INCENP"/>
<dbReference type="DMDM" id="212276501"/>
<dbReference type="jPOST" id="Q9NQS7"/>
<dbReference type="MassIVE" id="Q9NQS7"/>
<dbReference type="PaxDb" id="9606-ENSP00000378295"/>
<dbReference type="PeptideAtlas" id="Q9NQS7"/>
<dbReference type="ProteomicsDB" id="82181">
    <molecule id="Q9NQS7-1"/>
</dbReference>
<dbReference type="ProteomicsDB" id="82182">
    <molecule id="Q9NQS7-2"/>
</dbReference>
<dbReference type="Pumba" id="Q9NQS7"/>
<dbReference type="Antibodypedia" id="4598">
    <property type="antibodies" value="179 antibodies from 31 providers"/>
</dbReference>
<dbReference type="DNASU" id="3619"/>
<dbReference type="Ensembl" id="ENST00000278849.5">
    <molecule id="Q9NQS7-2"/>
    <property type="protein sequence ID" value="ENSP00000278849.4"/>
    <property type="gene ID" value="ENSG00000149503.14"/>
</dbReference>
<dbReference type="Ensembl" id="ENST00000394818.8">
    <molecule id="Q9NQS7-1"/>
    <property type="protein sequence ID" value="ENSP00000378295.3"/>
    <property type="gene ID" value="ENSG00000149503.14"/>
</dbReference>
<dbReference type="GeneID" id="3619"/>
<dbReference type="KEGG" id="hsa:3619"/>
<dbReference type="MANE-Select" id="ENST00000394818.8">
    <property type="protein sequence ID" value="ENSP00000378295.3"/>
    <property type="RefSeq nucleotide sequence ID" value="NM_001040694.2"/>
    <property type="RefSeq protein sequence ID" value="NP_001035784.1"/>
</dbReference>
<dbReference type="UCSC" id="uc001nsw.2">
    <molecule id="Q9NQS7-1"/>
    <property type="organism name" value="human"/>
</dbReference>
<dbReference type="AGR" id="HGNC:6058"/>
<dbReference type="CTD" id="3619"/>
<dbReference type="DisGeNET" id="3619"/>
<dbReference type="GeneCards" id="INCENP"/>
<dbReference type="HGNC" id="HGNC:6058">
    <property type="gene designation" value="INCENP"/>
</dbReference>
<dbReference type="HPA" id="ENSG00000149503">
    <property type="expression patterns" value="Tissue enhanced (bone)"/>
</dbReference>
<dbReference type="MIM" id="604411">
    <property type="type" value="gene"/>
</dbReference>
<dbReference type="neXtProt" id="NX_Q9NQS7"/>
<dbReference type="OpenTargets" id="ENSG00000149503"/>
<dbReference type="PharmGKB" id="PA29868"/>
<dbReference type="VEuPathDB" id="HostDB:ENSG00000149503"/>
<dbReference type="eggNOG" id="KOG4456">
    <property type="taxonomic scope" value="Eukaryota"/>
</dbReference>
<dbReference type="GeneTree" id="ENSGT00730000111073"/>
<dbReference type="HOGENOM" id="CLU_015997_0_0_1"/>
<dbReference type="InParanoid" id="Q9NQS7"/>
<dbReference type="OMA" id="DERYDHQ"/>
<dbReference type="OrthoDB" id="6123at2759"/>
<dbReference type="PAN-GO" id="Q9NQS7">
    <property type="GO annotations" value="11 GO annotations based on evolutionary models"/>
</dbReference>
<dbReference type="PhylomeDB" id="Q9NQS7"/>
<dbReference type="TreeFam" id="TF101172"/>
<dbReference type="PathwayCommons" id="Q9NQS7"/>
<dbReference type="Reactome" id="R-HSA-141444">
    <property type="pathway name" value="Amplification of signal from unattached kinetochores via a MAD2 inhibitory signal"/>
</dbReference>
<dbReference type="Reactome" id="R-HSA-2467813">
    <property type="pathway name" value="Separation of Sister Chromatids"/>
</dbReference>
<dbReference type="Reactome" id="R-HSA-2500257">
    <property type="pathway name" value="Resolution of Sister Chromatid Cohesion"/>
</dbReference>
<dbReference type="Reactome" id="R-HSA-4615885">
    <property type="pathway name" value="SUMOylation of DNA replication proteins"/>
</dbReference>
<dbReference type="Reactome" id="R-HSA-5663220">
    <property type="pathway name" value="RHO GTPases Activate Formins"/>
</dbReference>
<dbReference type="Reactome" id="R-HSA-68877">
    <property type="pathway name" value="Mitotic Prometaphase"/>
</dbReference>
<dbReference type="Reactome" id="R-HSA-9648025">
    <property type="pathway name" value="EML4 and NUDC in mitotic spindle formation"/>
</dbReference>
<dbReference type="SignaLink" id="Q9NQS7"/>
<dbReference type="SIGNOR" id="Q9NQS7"/>
<dbReference type="BioGRID-ORCS" id="3619">
    <property type="hits" value="784 hits in 1165 CRISPR screens"/>
</dbReference>
<dbReference type="CD-CODE" id="735EA068">
    <property type="entry name" value="Synthetic Condensate 000330"/>
</dbReference>
<dbReference type="CD-CODE" id="91857CE7">
    <property type="entry name" value="Nucleolus"/>
</dbReference>
<dbReference type="CD-CODE" id="A12AD357">
    <property type="entry name" value="Synthetic Condensate 000347"/>
</dbReference>
<dbReference type="ChiTaRS" id="INCENP">
    <property type="organism name" value="human"/>
</dbReference>
<dbReference type="EvolutionaryTrace" id="Q9NQS7"/>
<dbReference type="GeneWiki" id="INCENP"/>
<dbReference type="GenomeRNAi" id="3619"/>
<dbReference type="Pharos" id="Q9NQS7">
    <property type="development level" value="Tbio"/>
</dbReference>
<dbReference type="PRO" id="PR:Q9NQS7"/>
<dbReference type="Proteomes" id="UP000005640">
    <property type="component" value="Chromosome 11"/>
</dbReference>
<dbReference type="RNAct" id="Q9NQS7">
    <property type="molecule type" value="protein"/>
</dbReference>
<dbReference type="Bgee" id="ENSG00000149503">
    <property type="expression patterns" value="Expressed in ventricular zone and 121 other cell types or tissues"/>
</dbReference>
<dbReference type="ExpressionAtlas" id="Q9NQS7">
    <property type="expression patterns" value="baseline and differential"/>
</dbReference>
<dbReference type="GO" id="GO:0000801">
    <property type="term" value="C:central element"/>
    <property type="evidence" value="ECO:0007669"/>
    <property type="project" value="Ensembl"/>
</dbReference>
<dbReference type="GO" id="GO:0010369">
    <property type="term" value="C:chromocenter"/>
    <property type="evidence" value="ECO:0007669"/>
    <property type="project" value="Ensembl"/>
</dbReference>
<dbReference type="GO" id="GO:0032133">
    <property type="term" value="C:chromosome passenger complex"/>
    <property type="evidence" value="ECO:0000353"/>
    <property type="project" value="ComplexPortal"/>
</dbReference>
<dbReference type="GO" id="GO:0000775">
    <property type="term" value="C:chromosome, centromeric region"/>
    <property type="evidence" value="ECO:0000314"/>
    <property type="project" value="UniProtKB"/>
</dbReference>
<dbReference type="GO" id="GO:0005829">
    <property type="term" value="C:cytosol"/>
    <property type="evidence" value="ECO:0000314"/>
    <property type="project" value="HPA"/>
</dbReference>
<dbReference type="GO" id="GO:0000776">
    <property type="term" value="C:kinetochore"/>
    <property type="evidence" value="ECO:0000314"/>
    <property type="project" value="HPA"/>
</dbReference>
<dbReference type="GO" id="GO:0000800">
    <property type="term" value="C:lateral element"/>
    <property type="evidence" value="ECO:0007669"/>
    <property type="project" value="Ensembl"/>
</dbReference>
<dbReference type="GO" id="GO:1990385">
    <property type="term" value="C:meiotic spindle midzone"/>
    <property type="evidence" value="ECO:0000318"/>
    <property type="project" value="GO_Central"/>
</dbReference>
<dbReference type="GO" id="GO:0005874">
    <property type="term" value="C:microtubule"/>
    <property type="evidence" value="ECO:0007669"/>
    <property type="project" value="UniProtKB-KW"/>
</dbReference>
<dbReference type="GO" id="GO:0015630">
    <property type="term" value="C:microtubule cytoskeleton"/>
    <property type="evidence" value="ECO:0000314"/>
    <property type="project" value="ComplexPortal"/>
</dbReference>
<dbReference type="GO" id="GO:0030496">
    <property type="term" value="C:midbody"/>
    <property type="evidence" value="ECO:0000314"/>
    <property type="project" value="HPA"/>
</dbReference>
<dbReference type="GO" id="GO:0016604">
    <property type="term" value="C:nuclear body"/>
    <property type="evidence" value="ECO:0000314"/>
    <property type="project" value="HPA"/>
</dbReference>
<dbReference type="GO" id="GO:0005654">
    <property type="term" value="C:nucleoplasm"/>
    <property type="evidence" value="ECO:0000314"/>
    <property type="project" value="HPA"/>
</dbReference>
<dbReference type="GO" id="GO:0005634">
    <property type="term" value="C:nucleus"/>
    <property type="evidence" value="ECO:0000318"/>
    <property type="project" value="GO_Central"/>
</dbReference>
<dbReference type="GO" id="GO:0005721">
    <property type="term" value="C:pericentric heterochromatin"/>
    <property type="evidence" value="ECO:0000314"/>
    <property type="project" value="UniProtKB"/>
</dbReference>
<dbReference type="GO" id="GO:0032991">
    <property type="term" value="C:protein-containing complex"/>
    <property type="evidence" value="ECO:0000314"/>
    <property type="project" value="UniProtKB"/>
</dbReference>
<dbReference type="GO" id="GO:0005819">
    <property type="term" value="C:spindle"/>
    <property type="evidence" value="ECO:0000314"/>
    <property type="project" value="UniProtKB"/>
</dbReference>
<dbReference type="GO" id="GO:0140677">
    <property type="term" value="F:molecular function activator activity"/>
    <property type="evidence" value="ECO:0000353"/>
    <property type="project" value="DisProt"/>
</dbReference>
<dbReference type="GO" id="GO:0007059">
    <property type="term" value="P:chromosome segregation"/>
    <property type="evidence" value="ECO:0000315"/>
    <property type="project" value="UniProtKB"/>
</dbReference>
<dbReference type="GO" id="GO:0051257">
    <property type="term" value="P:meiotic spindle midzone assembly"/>
    <property type="evidence" value="ECO:0000318"/>
    <property type="project" value="GO_Central"/>
</dbReference>
<dbReference type="GO" id="GO:0051310">
    <property type="term" value="P:metaphase chromosome alignment"/>
    <property type="evidence" value="ECO:0000318"/>
    <property type="project" value="GO_Central"/>
</dbReference>
<dbReference type="GO" id="GO:0000278">
    <property type="term" value="P:mitotic cell cycle"/>
    <property type="evidence" value="ECO:0000303"/>
    <property type="project" value="ComplexPortal"/>
</dbReference>
<dbReference type="GO" id="GO:0000281">
    <property type="term" value="P:mitotic cytokinesis"/>
    <property type="evidence" value="ECO:0000315"/>
    <property type="project" value="UniProtKB"/>
</dbReference>
<dbReference type="GO" id="GO:0090307">
    <property type="term" value="P:mitotic spindle assembly"/>
    <property type="evidence" value="ECO:0000303"/>
    <property type="project" value="ComplexPortal"/>
</dbReference>
<dbReference type="GO" id="GO:0051256">
    <property type="term" value="P:mitotic spindle midzone assembly"/>
    <property type="evidence" value="ECO:0000303"/>
    <property type="project" value="ComplexPortal"/>
</dbReference>
<dbReference type="GO" id="GO:1902425">
    <property type="term" value="P:positive regulation of attachment of mitotic spindle microtubules to kinetochore"/>
    <property type="evidence" value="ECO:0000303"/>
    <property type="project" value="ComplexPortal"/>
</dbReference>
<dbReference type="GO" id="GO:0090267">
    <property type="term" value="P:positive regulation of mitotic cell cycle spindle assembly checkpoint"/>
    <property type="evidence" value="ECO:0000303"/>
    <property type="project" value="ComplexPortal"/>
</dbReference>
<dbReference type="GO" id="GO:1903490">
    <property type="term" value="P:positive regulation of mitotic cytokinesis"/>
    <property type="evidence" value="ECO:0000303"/>
    <property type="project" value="ComplexPortal"/>
</dbReference>
<dbReference type="GO" id="GO:1901970">
    <property type="term" value="P:positive regulation of mitotic sister chromatid separation"/>
    <property type="evidence" value="ECO:0000303"/>
    <property type="project" value="ComplexPortal"/>
</dbReference>
<dbReference type="DisProt" id="DP02390"/>
<dbReference type="FunFam" id="1.20.5.3600:FF:000001">
    <property type="entry name" value="inner centromere protein-like"/>
    <property type="match status" value="1"/>
</dbReference>
<dbReference type="Gene3D" id="1.20.5.3600">
    <property type="match status" value="1"/>
</dbReference>
<dbReference type="Gene3D" id="6.10.250.2990">
    <property type="match status" value="1"/>
</dbReference>
<dbReference type="IDEAL" id="IID00224"/>
<dbReference type="InterPro" id="IPR022006">
    <property type="entry name" value="INCENP_N"/>
</dbReference>
<dbReference type="InterPro" id="IPR005635">
    <property type="entry name" value="Inner_centromere_prot_ARK-bd"/>
</dbReference>
<dbReference type="PANTHER" id="PTHR13142">
    <property type="entry name" value="INNER CENTROMERE PROTEIN"/>
    <property type="match status" value="1"/>
</dbReference>
<dbReference type="PANTHER" id="PTHR13142:SF1">
    <property type="entry name" value="INNER CENTROMERE PROTEIN"/>
    <property type="match status" value="1"/>
</dbReference>
<dbReference type="Pfam" id="PF03941">
    <property type="entry name" value="INCENP_ARK-bind"/>
    <property type="match status" value="1"/>
</dbReference>
<dbReference type="Pfam" id="PF12178">
    <property type="entry name" value="INCENP_N"/>
    <property type="match status" value="1"/>
</dbReference>